<accession>B2UEK7</accession>
<feature type="chain" id="PRO_1000142436" description="Large ribosomal subunit protein uL5">
    <location>
        <begin position="1"/>
        <end position="180"/>
    </location>
</feature>
<proteinExistence type="inferred from homology"/>
<sequence length="180" mass="20417">MTARLQEFYKEKVVPELIKQFGYKSVMEVPRITKITLNMGLGEAINDKKVIEHATGDLIKIAGQKPIVTKARKAIAGFKIRQGYPIGTMVTLRGQRMYEFLDRFITVSLPRVRDFRGVSGKAFDGRGNYNIGVKEQIIFPEIEYDKIDALRGLNISITTTAKNDEEAKALLNAFKFPFRN</sequence>
<protein>
    <recommendedName>
        <fullName evidence="1">Large ribosomal subunit protein uL5</fullName>
    </recommendedName>
    <alternativeName>
        <fullName evidence="2">50S ribosomal protein L5</fullName>
    </alternativeName>
</protein>
<comment type="function">
    <text evidence="1">This is one of the proteins that bind and probably mediate the attachment of the 5S RNA into the large ribosomal subunit, where it forms part of the central protuberance. In the 70S ribosome it contacts protein S13 of the 30S subunit (bridge B1b), connecting the 2 subunits; this bridge is implicated in subunit movement. Contacts the P site tRNA; the 5S rRNA and some of its associated proteins might help stabilize positioning of ribosome-bound tRNAs.</text>
</comment>
<comment type="subunit">
    <text evidence="1">Part of the 50S ribosomal subunit; part of the 5S rRNA/L5/L18/L25 subcomplex. Contacts the 5S rRNA and the P site tRNA. Forms a bridge to the 30S subunit in the 70S ribosome.</text>
</comment>
<comment type="similarity">
    <text evidence="1">Belongs to the universal ribosomal protein uL5 family.</text>
</comment>
<name>RL5_RALPJ</name>
<reference key="1">
    <citation type="submission" date="2008-05" db="EMBL/GenBank/DDBJ databases">
        <title>Complete sequence of chromosome 1 of Ralstonia pickettii 12J.</title>
        <authorList>
            <person name="Lucas S."/>
            <person name="Copeland A."/>
            <person name="Lapidus A."/>
            <person name="Glavina del Rio T."/>
            <person name="Dalin E."/>
            <person name="Tice H."/>
            <person name="Bruce D."/>
            <person name="Goodwin L."/>
            <person name="Pitluck S."/>
            <person name="Meincke L."/>
            <person name="Brettin T."/>
            <person name="Detter J.C."/>
            <person name="Han C."/>
            <person name="Kuske C.R."/>
            <person name="Schmutz J."/>
            <person name="Larimer F."/>
            <person name="Land M."/>
            <person name="Hauser L."/>
            <person name="Kyrpides N."/>
            <person name="Mikhailova N."/>
            <person name="Marsh T."/>
            <person name="Richardson P."/>
        </authorList>
    </citation>
    <scope>NUCLEOTIDE SEQUENCE [LARGE SCALE GENOMIC DNA]</scope>
    <source>
        <strain>12J</strain>
    </source>
</reference>
<dbReference type="EMBL" id="CP001068">
    <property type="protein sequence ID" value="ACD28407.1"/>
    <property type="molecule type" value="Genomic_DNA"/>
</dbReference>
<dbReference type="SMR" id="B2UEK7"/>
<dbReference type="STRING" id="402626.Rpic_3285"/>
<dbReference type="KEGG" id="rpi:Rpic_3285"/>
<dbReference type="eggNOG" id="COG0094">
    <property type="taxonomic scope" value="Bacteria"/>
</dbReference>
<dbReference type="HOGENOM" id="CLU_061015_2_1_4"/>
<dbReference type="GO" id="GO:1990904">
    <property type="term" value="C:ribonucleoprotein complex"/>
    <property type="evidence" value="ECO:0007669"/>
    <property type="project" value="UniProtKB-KW"/>
</dbReference>
<dbReference type="GO" id="GO:0005840">
    <property type="term" value="C:ribosome"/>
    <property type="evidence" value="ECO:0007669"/>
    <property type="project" value="UniProtKB-KW"/>
</dbReference>
<dbReference type="GO" id="GO:0019843">
    <property type="term" value="F:rRNA binding"/>
    <property type="evidence" value="ECO:0007669"/>
    <property type="project" value="UniProtKB-UniRule"/>
</dbReference>
<dbReference type="GO" id="GO:0003735">
    <property type="term" value="F:structural constituent of ribosome"/>
    <property type="evidence" value="ECO:0007669"/>
    <property type="project" value="InterPro"/>
</dbReference>
<dbReference type="GO" id="GO:0000049">
    <property type="term" value="F:tRNA binding"/>
    <property type="evidence" value="ECO:0007669"/>
    <property type="project" value="UniProtKB-UniRule"/>
</dbReference>
<dbReference type="GO" id="GO:0006412">
    <property type="term" value="P:translation"/>
    <property type="evidence" value="ECO:0007669"/>
    <property type="project" value="UniProtKB-UniRule"/>
</dbReference>
<dbReference type="FunFam" id="3.30.1440.10:FF:000001">
    <property type="entry name" value="50S ribosomal protein L5"/>
    <property type="match status" value="1"/>
</dbReference>
<dbReference type="Gene3D" id="3.30.1440.10">
    <property type="match status" value="1"/>
</dbReference>
<dbReference type="HAMAP" id="MF_01333_B">
    <property type="entry name" value="Ribosomal_uL5_B"/>
    <property type="match status" value="1"/>
</dbReference>
<dbReference type="InterPro" id="IPR002132">
    <property type="entry name" value="Ribosomal_uL5"/>
</dbReference>
<dbReference type="InterPro" id="IPR020930">
    <property type="entry name" value="Ribosomal_uL5_bac-type"/>
</dbReference>
<dbReference type="InterPro" id="IPR031309">
    <property type="entry name" value="Ribosomal_uL5_C"/>
</dbReference>
<dbReference type="InterPro" id="IPR020929">
    <property type="entry name" value="Ribosomal_uL5_CS"/>
</dbReference>
<dbReference type="InterPro" id="IPR022803">
    <property type="entry name" value="Ribosomal_uL5_dom_sf"/>
</dbReference>
<dbReference type="InterPro" id="IPR031310">
    <property type="entry name" value="Ribosomal_uL5_N"/>
</dbReference>
<dbReference type="NCBIfam" id="NF000585">
    <property type="entry name" value="PRK00010.1"/>
    <property type="match status" value="1"/>
</dbReference>
<dbReference type="PANTHER" id="PTHR11994">
    <property type="entry name" value="60S RIBOSOMAL PROTEIN L11-RELATED"/>
    <property type="match status" value="1"/>
</dbReference>
<dbReference type="Pfam" id="PF00281">
    <property type="entry name" value="Ribosomal_L5"/>
    <property type="match status" value="1"/>
</dbReference>
<dbReference type="Pfam" id="PF00673">
    <property type="entry name" value="Ribosomal_L5_C"/>
    <property type="match status" value="1"/>
</dbReference>
<dbReference type="PIRSF" id="PIRSF002161">
    <property type="entry name" value="Ribosomal_L5"/>
    <property type="match status" value="1"/>
</dbReference>
<dbReference type="SUPFAM" id="SSF55282">
    <property type="entry name" value="RL5-like"/>
    <property type="match status" value="1"/>
</dbReference>
<dbReference type="PROSITE" id="PS00358">
    <property type="entry name" value="RIBOSOMAL_L5"/>
    <property type="match status" value="1"/>
</dbReference>
<keyword id="KW-0687">Ribonucleoprotein</keyword>
<keyword id="KW-0689">Ribosomal protein</keyword>
<keyword id="KW-0694">RNA-binding</keyword>
<keyword id="KW-0699">rRNA-binding</keyword>
<keyword id="KW-0820">tRNA-binding</keyword>
<evidence type="ECO:0000255" key="1">
    <source>
        <dbReference type="HAMAP-Rule" id="MF_01333"/>
    </source>
</evidence>
<evidence type="ECO:0000305" key="2"/>
<gene>
    <name evidence="1" type="primary">rplE</name>
    <name type="ordered locus">Rpic_3285</name>
</gene>
<organism>
    <name type="scientific">Ralstonia pickettii (strain 12J)</name>
    <dbReference type="NCBI Taxonomy" id="402626"/>
    <lineage>
        <taxon>Bacteria</taxon>
        <taxon>Pseudomonadati</taxon>
        <taxon>Pseudomonadota</taxon>
        <taxon>Betaproteobacteria</taxon>
        <taxon>Burkholderiales</taxon>
        <taxon>Burkholderiaceae</taxon>
        <taxon>Ralstonia</taxon>
    </lineage>
</organism>